<comment type="function">
    <text evidence="1">May act as Rab effector protein and play a role in vesicle trafficking. Binds phospholipids (By similarity).</text>
</comment>
<comment type="subunit">
    <text evidence="1">Binds RAB27A that has been activated by GTP-binding.</text>
</comment>
<comment type="subcellular location">
    <subcellularLocation>
        <location evidence="1">Membrane</location>
        <topology evidence="1">Peripheral membrane protein</topology>
    </subcellularLocation>
</comment>
<feature type="chain" id="PRO_0000190221" description="Synaptotagmin-like protein 5">
    <location>
        <begin position="1"/>
        <end position="753"/>
    </location>
</feature>
<feature type="domain" description="RabBD" evidence="4">
    <location>
        <begin position="7"/>
        <end position="123"/>
    </location>
</feature>
<feature type="domain" description="C2 1" evidence="3">
    <location>
        <begin position="429"/>
        <end position="550"/>
    </location>
</feature>
<feature type="domain" description="C2 2" evidence="3">
    <location>
        <begin position="590"/>
        <end position="717"/>
    </location>
</feature>
<feature type="zinc finger region" description="FYVE-type">
    <location>
        <begin position="64"/>
        <end position="106"/>
    </location>
</feature>
<feature type="region of interest" description="Disordered" evidence="5">
    <location>
        <begin position="145"/>
        <end position="188"/>
    </location>
</feature>
<feature type="region of interest" description="Disordered" evidence="5">
    <location>
        <begin position="221"/>
        <end position="283"/>
    </location>
</feature>
<feature type="region of interest" description="Disordered" evidence="5">
    <location>
        <begin position="298"/>
        <end position="359"/>
    </location>
</feature>
<feature type="compositionally biased region" description="Low complexity" evidence="5">
    <location>
        <begin position="224"/>
        <end position="238"/>
    </location>
</feature>
<feature type="compositionally biased region" description="Polar residues" evidence="5">
    <location>
        <begin position="260"/>
        <end position="275"/>
    </location>
</feature>
<feature type="compositionally biased region" description="Polar residues" evidence="5">
    <location>
        <begin position="305"/>
        <end position="316"/>
    </location>
</feature>
<feature type="modified residue" description="Phosphoserine" evidence="2">
    <location>
        <position position="147"/>
    </location>
</feature>
<reference key="1">
    <citation type="journal article" date="2003" name="J. Biol. Chem.">
        <title>Slp4-a/granuphilin-a inhibits dense-core vesicle exocytosis through interaction with the GDP-bound form of Rab27A in PC12 cells.</title>
        <authorList>
            <person name="Fukuda M."/>
        </authorList>
    </citation>
    <scope>NUCLEOTIDE SEQUENCE [MRNA]</scope>
    <source>
        <strain>Sprague-Dawley</strain>
        <tissue>Testis</tissue>
    </source>
</reference>
<sequence length="753" mass="83645">MSKNSEFINLSFLLDHEKEMILGVLKRDEYLKKVEDKRIRKLKNELLEAKRRSGKTHQEANRVCVHCQKSLGLIFDRGAPCQACSLRVCSECRVTGLDGSWKCTVCAKVAQLRIISGEWFLEEKAKRFKQVNVLGTDVVRQSILRRSPGSEEIQNQEQAHQGADKSDTLSSVRQKATHDGPKRKGFLLSKFRSATRGEIKTPKAESGRSYSLDLDNQNLQSFKSVSGSDRGSTTSSDLTDQEAGRGAPKGSCSNGGIPVTQRSPAPSARSVTSISSREHGFENSMALATIESISEELTKSHRRNTSGTPSIAVSGTSLSSERSRSELDLSESFAEDLEDTSSIRSRSVPGALDKDLNSLEDTEDGVDLVSSRFSANTHSLASGLSTSSQAGSDRKRSYLHVPDADSDTTSLNSMMSVYSETGDYGNVKVTGEILLHISYCYKTGGLYIFVKNCRNLAIGDEKKQRTDAYVKSYLLPDKTRNNKRKTKIRTGTNPEFNETLKYTISHTQLETRTLQLSVWHYDRFGRNSFLGEVEIAFDSWNFENPCDEWFVLQPKVELAPDISLQYKGELTIVLRYIPPEENLIFPVEQPQGKKIFKKGKKKESPAISGGILEVFIKEAKNLTAVKAGGTSDSFVKGYLLPDDNKATKHKTAVVKKSVNPQWNHVFIFSGLYPQDIQNACLELTIWDKEAFSSNIFLGGVRLNSGSGISHGKAVDWMDSRGEEQRLWQKMADNPGTSVEGVLMLRSSMAKCRL</sequence>
<gene>
    <name type="primary">Sytl5</name>
    <name type="synonym">Slp5</name>
</gene>
<accession>Q812E4</accession>
<keyword id="KW-0472">Membrane</keyword>
<keyword id="KW-0479">Metal-binding</keyword>
<keyword id="KW-0597">Phosphoprotein</keyword>
<keyword id="KW-1185">Reference proteome</keyword>
<keyword id="KW-0677">Repeat</keyword>
<keyword id="KW-0862">Zinc</keyword>
<keyword id="KW-0863">Zinc-finger</keyword>
<evidence type="ECO:0000250" key="1"/>
<evidence type="ECO:0000250" key="2">
    <source>
        <dbReference type="UniProtKB" id="Q80T23"/>
    </source>
</evidence>
<evidence type="ECO:0000255" key="3">
    <source>
        <dbReference type="PROSITE-ProRule" id="PRU00041"/>
    </source>
</evidence>
<evidence type="ECO:0000255" key="4">
    <source>
        <dbReference type="PROSITE-ProRule" id="PRU00234"/>
    </source>
</evidence>
<evidence type="ECO:0000256" key="5">
    <source>
        <dbReference type="SAM" id="MobiDB-lite"/>
    </source>
</evidence>
<name>SYTL5_RAT</name>
<protein>
    <recommendedName>
        <fullName>Synaptotagmin-like protein 5</fullName>
    </recommendedName>
</protein>
<organism>
    <name type="scientific">Rattus norvegicus</name>
    <name type="common">Rat</name>
    <dbReference type="NCBI Taxonomy" id="10116"/>
    <lineage>
        <taxon>Eukaryota</taxon>
        <taxon>Metazoa</taxon>
        <taxon>Chordata</taxon>
        <taxon>Craniata</taxon>
        <taxon>Vertebrata</taxon>
        <taxon>Euteleostomi</taxon>
        <taxon>Mammalia</taxon>
        <taxon>Eutheria</taxon>
        <taxon>Euarchontoglires</taxon>
        <taxon>Glires</taxon>
        <taxon>Rodentia</taxon>
        <taxon>Myomorpha</taxon>
        <taxon>Muroidea</taxon>
        <taxon>Muridae</taxon>
        <taxon>Murinae</taxon>
        <taxon>Rattus</taxon>
    </lineage>
</organism>
<proteinExistence type="evidence at transcript level"/>
<dbReference type="EMBL" id="AB098162">
    <property type="protein sequence ID" value="BAC57423.1"/>
    <property type="molecule type" value="mRNA"/>
</dbReference>
<dbReference type="RefSeq" id="NP_848016.1">
    <property type="nucleotide sequence ID" value="NM_178333.1"/>
</dbReference>
<dbReference type="SMR" id="Q812E4"/>
<dbReference type="FunCoup" id="Q812E4">
    <property type="interactions" value="8"/>
</dbReference>
<dbReference type="STRING" id="10116.ENSRNOP00000004785"/>
<dbReference type="GlyGen" id="Q812E4">
    <property type="glycosylation" value="1 site"/>
</dbReference>
<dbReference type="iPTMnet" id="Q812E4"/>
<dbReference type="PhosphoSitePlus" id="Q812E4"/>
<dbReference type="PaxDb" id="10116-ENSRNOP00000004785"/>
<dbReference type="GeneID" id="302538"/>
<dbReference type="KEGG" id="rno:302538"/>
<dbReference type="UCSC" id="RGD:631342">
    <property type="organism name" value="rat"/>
</dbReference>
<dbReference type="AGR" id="RGD:631342"/>
<dbReference type="CTD" id="94122"/>
<dbReference type="RGD" id="631342">
    <property type="gene designation" value="Sytl5"/>
</dbReference>
<dbReference type="eggNOG" id="KOG1028">
    <property type="taxonomic scope" value="Eukaryota"/>
</dbReference>
<dbReference type="InParanoid" id="Q812E4"/>
<dbReference type="PhylomeDB" id="Q812E4"/>
<dbReference type="PRO" id="PR:Q812E4"/>
<dbReference type="Proteomes" id="UP000002494">
    <property type="component" value="Unplaced"/>
</dbReference>
<dbReference type="GO" id="GO:0070382">
    <property type="term" value="C:exocytic vesicle"/>
    <property type="evidence" value="ECO:0000318"/>
    <property type="project" value="GO_Central"/>
</dbReference>
<dbReference type="GO" id="GO:0005886">
    <property type="term" value="C:plasma membrane"/>
    <property type="evidence" value="ECO:0000318"/>
    <property type="project" value="GO_Central"/>
</dbReference>
<dbReference type="GO" id="GO:0042043">
    <property type="term" value="F:neurexin family protein binding"/>
    <property type="evidence" value="ECO:0000318"/>
    <property type="project" value="GO_Central"/>
</dbReference>
<dbReference type="GO" id="GO:0005543">
    <property type="term" value="F:phospholipid binding"/>
    <property type="evidence" value="ECO:0007669"/>
    <property type="project" value="InterPro"/>
</dbReference>
<dbReference type="GO" id="GO:0031267">
    <property type="term" value="F:small GTPase binding"/>
    <property type="evidence" value="ECO:0007669"/>
    <property type="project" value="InterPro"/>
</dbReference>
<dbReference type="GO" id="GO:0008270">
    <property type="term" value="F:zinc ion binding"/>
    <property type="evidence" value="ECO:0007669"/>
    <property type="project" value="UniProtKB-KW"/>
</dbReference>
<dbReference type="GO" id="GO:0006887">
    <property type="term" value="P:exocytosis"/>
    <property type="evidence" value="ECO:0000266"/>
    <property type="project" value="RGD"/>
</dbReference>
<dbReference type="GO" id="GO:0006886">
    <property type="term" value="P:intracellular protein transport"/>
    <property type="evidence" value="ECO:0007669"/>
    <property type="project" value="InterPro"/>
</dbReference>
<dbReference type="CDD" id="cd04029">
    <property type="entry name" value="C2A_SLP-4_5"/>
    <property type="match status" value="1"/>
</dbReference>
<dbReference type="CDD" id="cd04020">
    <property type="entry name" value="C2B_SLP_1-2-3-4"/>
    <property type="match status" value="1"/>
</dbReference>
<dbReference type="CDD" id="cd15766">
    <property type="entry name" value="FYVE_Slp5"/>
    <property type="match status" value="1"/>
</dbReference>
<dbReference type="FunFam" id="2.60.40.150:FF:000006">
    <property type="entry name" value="Synaptotagmin-like 5, isoform CRA_a"/>
    <property type="match status" value="1"/>
</dbReference>
<dbReference type="FunFam" id="2.60.40.150:FF:000107">
    <property type="entry name" value="Synaptotagmin-like 5, isoform CRA_a"/>
    <property type="match status" value="1"/>
</dbReference>
<dbReference type="FunFam" id="3.30.40.10:FF:000018">
    <property type="entry name" value="Synaptotagmin-like 5, isoform CRA_a"/>
    <property type="match status" value="1"/>
</dbReference>
<dbReference type="Gene3D" id="2.60.40.150">
    <property type="entry name" value="C2 domain"/>
    <property type="match status" value="2"/>
</dbReference>
<dbReference type="Gene3D" id="3.30.40.10">
    <property type="entry name" value="Zinc/RING finger domain, C3HC4 (zinc finger)"/>
    <property type="match status" value="1"/>
</dbReference>
<dbReference type="InterPro" id="IPR000008">
    <property type="entry name" value="C2_dom"/>
</dbReference>
<dbReference type="InterPro" id="IPR035892">
    <property type="entry name" value="C2_domain_sf"/>
</dbReference>
<dbReference type="InterPro" id="IPR041282">
    <property type="entry name" value="FYVE_2"/>
</dbReference>
<dbReference type="InterPro" id="IPR010911">
    <property type="entry name" value="Rab_BD"/>
</dbReference>
<dbReference type="InterPro" id="IPR037303">
    <property type="entry name" value="SLP-4/5_C2A"/>
</dbReference>
<dbReference type="InterPro" id="IPR043567">
    <property type="entry name" value="SYTL1-5_C2B"/>
</dbReference>
<dbReference type="InterPro" id="IPR042783">
    <property type="entry name" value="SYTL5_FYVE"/>
</dbReference>
<dbReference type="InterPro" id="IPR011011">
    <property type="entry name" value="Znf_FYVE_PHD"/>
</dbReference>
<dbReference type="InterPro" id="IPR013083">
    <property type="entry name" value="Znf_RING/FYVE/PHD"/>
</dbReference>
<dbReference type="PANTHER" id="PTHR45716">
    <property type="entry name" value="BITESIZE, ISOFORM I"/>
    <property type="match status" value="1"/>
</dbReference>
<dbReference type="PANTHER" id="PTHR45716:SF6">
    <property type="entry name" value="SYNAPTOTAGMIN-LIKE PROTEIN 5"/>
    <property type="match status" value="1"/>
</dbReference>
<dbReference type="Pfam" id="PF00168">
    <property type="entry name" value="C2"/>
    <property type="match status" value="2"/>
</dbReference>
<dbReference type="Pfam" id="PF02318">
    <property type="entry name" value="FYVE_2"/>
    <property type="match status" value="1"/>
</dbReference>
<dbReference type="SMART" id="SM00239">
    <property type="entry name" value="C2"/>
    <property type="match status" value="2"/>
</dbReference>
<dbReference type="SUPFAM" id="SSF49562">
    <property type="entry name" value="C2 domain (Calcium/lipid-binding domain, CaLB)"/>
    <property type="match status" value="2"/>
</dbReference>
<dbReference type="SUPFAM" id="SSF57903">
    <property type="entry name" value="FYVE/PHD zinc finger"/>
    <property type="match status" value="1"/>
</dbReference>
<dbReference type="PROSITE" id="PS50004">
    <property type="entry name" value="C2"/>
    <property type="match status" value="2"/>
</dbReference>
<dbReference type="PROSITE" id="PS50916">
    <property type="entry name" value="RABBD"/>
    <property type="match status" value="1"/>
</dbReference>